<gene>
    <name evidence="1" type="primary">pyrG</name>
    <name type="synonym">ctrA</name>
    <name type="ordered locus">MW2051</name>
</gene>
<protein>
    <recommendedName>
        <fullName evidence="1">CTP synthase</fullName>
        <ecNumber evidence="1">6.3.4.2</ecNumber>
    </recommendedName>
    <alternativeName>
        <fullName evidence="1">Cytidine 5'-triphosphate synthase</fullName>
    </alternativeName>
    <alternativeName>
        <fullName evidence="1">Cytidine triphosphate synthetase</fullName>
        <shortName evidence="1">CTP synthetase</shortName>
        <shortName evidence="1">CTPS</shortName>
    </alternativeName>
    <alternativeName>
        <fullName evidence="1">UTP--ammonia ligase</fullName>
    </alternativeName>
</protein>
<accession>P65924</accession>
<accession>Q99SD1</accession>
<feature type="chain" id="PRO_0000138227" description="CTP synthase">
    <location>
        <begin position="1"/>
        <end position="536"/>
    </location>
</feature>
<feature type="domain" description="Glutamine amidotransferase type-1" evidence="1">
    <location>
        <begin position="293"/>
        <end position="535"/>
    </location>
</feature>
<feature type="region of interest" description="Amidoligase domain" evidence="1">
    <location>
        <begin position="1"/>
        <end position="267"/>
    </location>
</feature>
<feature type="active site" description="Nucleophile; for glutamine hydrolysis" evidence="1">
    <location>
        <position position="382"/>
    </location>
</feature>
<feature type="active site" evidence="1">
    <location>
        <position position="508"/>
    </location>
</feature>
<feature type="active site" evidence="1">
    <location>
        <position position="510"/>
    </location>
</feature>
<feature type="binding site" evidence="1">
    <location>
        <position position="13"/>
    </location>
    <ligand>
        <name>CTP</name>
        <dbReference type="ChEBI" id="CHEBI:37563"/>
        <note>allosteric inhibitor</note>
    </ligand>
</feature>
<feature type="binding site" evidence="1">
    <location>
        <position position="13"/>
    </location>
    <ligand>
        <name>UTP</name>
        <dbReference type="ChEBI" id="CHEBI:46398"/>
    </ligand>
</feature>
<feature type="binding site" evidence="1">
    <location>
        <begin position="14"/>
        <end position="19"/>
    </location>
    <ligand>
        <name>ATP</name>
        <dbReference type="ChEBI" id="CHEBI:30616"/>
    </ligand>
</feature>
<feature type="binding site" evidence="1">
    <location>
        <position position="54"/>
    </location>
    <ligand>
        <name>L-glutamine</name>
        <dbReference type="ChEBI" id="CHEBI:58359"/>
    </ligand>
</feature>
<feature type="binding site" evidence="1">
    <location>
        <position position="71"/>
    </location>
    <ligand>
        <name>ATP</name>
        <dbReference type="ChEBI" id="CHEBI:30616"/>
    </ligand>
</feature>
<feature type="binding site" evidence="1">
    <location>
        <position position="71"/>
    </location>
    <ligand>
        <name>Mg(2+)</name>
        <dbReference type="ChEBI" id="CHEBI:18420"/>
    </ligand>
</feature>
<feature type="binding site" evidence="1">
    <location>
        <position position="141"/>
    </location>
    <ligand>
        <name>Mg(2+)</name>
        <dbReference type="ChEBI" id="CHEBI:18420"/>
    </ligand>
</feature>
<feature type="binding site" evidence="1">
    <location>
        <begin position="148"/>
        <end position="150"/>
    </location>
    <ligand>
        <name>CTP</name>
        <dbReference type="ChEBI" id="CHEBI:37563"/>
        <note>allosteric inhibitor</note>
    </ligand>
</feature>
<feature type="binding site" evidence="1">
    <location>
        <begin position="188"/>
        <end position="193"/>
    </location>
    <ligand>
        <name>CTP</name>
        <dbReference type="ChEBI" id="CHEBI:37563"/>
        <note>allosteric inhibitor</note>
    </ligand>
</feature>
<feature type="binding site" evidence="1">
    <location>
        <begin position="188"/>
        <end position="193"/>
    </location>
    <ligand>
        <name>UTP</name>
        <dbReference type="ChEBI" id="CHEBI:46398"/>
    </ligand>
</feature>
<feature type="binding site" evidence="1">
    <location>
        <position position="224"/>
    </location>
    <ligand>
        <name>CTP</name>
        <dbReference type="ChEBI" id="CHEBI:37563"/>
        <note>allosteric inhibitor</note>
    </ligand>
</feature>
<feature type="binding site" evidence="1">
    <location>
        <position position="224"/>
    </location>
    <ligand>
        <name>UTP</name>
        <dbReference type="ChEBI" id="CHEBI:46398"/>
    </ligand>
</feature>
<feature type="binding site" evidence="1">
    <location>
        <begin position="240"/>
        <end position="242"/>
    </location>
    <ligand>
        <name>ATP</name>
        <dbReference type="ChEBI" id="CHEBI:30616"/>
    </ligand>
</feature>
<feature type="binding site" evidence="1">
    <location>
        <position position="355"/>
    </location>
    <ligand>
        <name>L-glutamine</name>
        <dbReference type="ChEBI" id="CHEBI:58359"/>
    </ligand>
</feature>
<feature type="binding site" evidence="1">
    <location>
        <begin position="383"/>
        <end position="386"/>
    </location>
    <ligand>
        <name>L-glutamine</name>
        <dbReference type="ChEBI" id="CHEBI:58359"/>
    </ligand>
</feature>
<feature type="binding site" evidence="1">
    <location>
        <position position="406"/>
    </location>
    <ligand>
        <name>L-glutamine</name>
        <dbReference type="ChEBI" id="CHEBI:58359"/>
    </ligand>
</feature>
<feature type="binding site" evidence="1">
    <location>
        <position position="463"/>
    </location>
    <ligand>
        <name>L-glutamine</name>
        <dbReference type="ChEBI" id="CHEBI:58359"/>
    </ligand>
</feature>
<keyword id="KW-0067">ATP-binding</keyword>
<keyword id="KW-0315">Glutamine amidotransferase</keyword>
<keyword id="KW-0436">Ligase</keyword>
<keyword id="KW-0460">Magnesium</keyword>
<keyword id="KW-0479">Metal-binding</keyword>
<keyword id="KW-0547">Nucleotide-binding</keyword>
<keyword id="KW-0665">Pyrimidine biosynthesis</keyword>
<comment type="function">
    <text evidence="1">Catalyzes the ATP-dependent amination of UTP to CTP with either L-glutamine or ammonia as the source of nitrogen. Regulates intracellular CTP levels through interactions with the four ribonucleotide triphosphates.</text>
</comment>
<comment type="catalytic activity">
    <reaction evidence="1">
        <text>UTP + L-glutamine + ATP + H2O = CTP + L-glutamate + ADP + phosphate + 2 H(+)</text>
        <dbReference type="Rhea" id="RHEA:26426"/>
        <dbReference type="ChEBI" id="CHEBI:15377"/>
        <dbReference type="ChEBI" id="CHEBI:15378"/>
        <dbReference type="ChEBI" id="CHEBI:29985"/>
        <dbReference type="ChEBI" id="CHEBI:30616"/>
        <dbReference type="ChEBI" id="CHEBI:37563"/>
        <dbReference type="ChEBI" id="CHEBI:43474"/>
        <dbReference type="ChEBI" id="CHEBI:46398"/>
        <dbReference type="ChEBI" id="CHEBI:58359"/>
        <dbReference type="ChEBI" id="CHEBI:456216"/>
        <dbReference type="EC" id="6.3.4.2"/>
    </reaction>
</comment>
<comment type="catalytic activity">
    <reaction evidence="1">
        <text>L-glutamine + H2O = L-glutamate + NH4(+)</text>
        <dbReference type="Rhea" id="RHEA:15889"/>
        <dbReference type="ChEBI" id="CHEBI:15377"/>
        <dbReference type="ChEBI" id="CHEBI:28938"/>
        <dbReference type="ChEBI" id="CHEBI:29985"/>
        <dbReference type="ChEBI" id="CHEBI:58359"/>
    </reaction>
</comment>
<comment type="catalytic activity">
    <reaction evidence="1">
        <text>UTP + NH4(+) + ATP = CTP + ADP + phosphate + 2 H(+)</text>
        <dbReference type="Rhea" id="RHEA:16597"/>
        <dbReference type="ChEBI" id="CHEBI:15378"/>
        <dbReference type="ChEBI" id="CHEBI:28938"/>
        <dbReference type="ChEBI" id="CHEBI:30616"/>
        <dbReference type="ChEBI" id="CHEBI:37563"/>
        <dbReference type="ChEBI" id="CHEBI:43474"/>
        <dbReference type="ChEBI" id="CHEBI:46398"/>
        <dbReference type="ChEBI" id="CHEBI:456216"/>
    </reaction>
</comment>
<comment type="activity regulation">
    <text evidence="1">Allosterically activated by GTP, when glutamine is the substrate; GTP has no effect on the reaction when ammonia is the substrate. The allosteric effector GTP functions by stabilizing the protein conformation that binds the tetrahedral intermediate(s) formed during glutamine hydrolysis. Inhibited by the product CTP, via allosteric rather than competitive inhibition.</text>
</comment>
<comment type="pathway">
    <text evidence="1">Pyrimidine metabolism; CTP biosynthesis via de novo pathway; CTP from UDP: step 2/2.</text>
</comment>
<comment type="subunit">
    <text evidence="1">Homotetramer.</text>
</comment>
<comment type="miscellaneous">
    <text evidence="1">CTPSs have evolved a hybrid strategy for distinguishing between UTP and CTP. The overlapping regions of the product feedback inhibitory and substrate sites recognize a common feature in both compounds, the triphosphate moiety. To differentiate isosteric substrate and product pyrimidine rings, an additional pocket far from the expected kinase/ligase catalytic site, specifically recognizes the cytosine and ribose portions of the product inhibitor.</text>
</comment>
<comment type="similarity">
    <text evidence="1">Belongs to the CTP synthase family.</text>
</comment>
<organism>
    <name type="scientific">Staphylococcus aureus (strain MW2)</name>
    <dbReference type="NCBI Taxonomy" id="196620"/>
    <lineage>
        <taxon>Bacteria</taxon>
        <taxon>Bacillati</taxon>
        <taxon>Bacillota</taxon>
        <taxon>Bacilli</taxon>
        <taxon>Bacillales</taxon>
        <taxon>Staphylococcaceae</taxon>
        <taxon>Staphylococcus</taxon>
    </lineage>
</organism>
<reference key="1">
    <citation type="journal article" date="2002" name="Lancet">
        <title>Genome and virulence determinants of high virulence community-acquired MRSA.</title>
        <authorList>
            <person name="Baba T."/>
            <person name="Takeuchi F."/>
            <person name="Kuroda M."/>
            <person name="Yuzawa H."/>
            <person name="Aoki K."/>
            <person name="Oguchi A."/>
            <person name="Nagai Y."/>
            <person name="Iwama N."/>
            <person name="Asano K."/>
            <person name="Naimi T."/>
            <person name="Kuroda H."/>
            <person name="Cui L."/>
            <person name="Yamamoto K."/>
            <person name="Hiramatsu K."/>
        </authorList>
    </citation>
    <scope>NUCLEOTIDE SEQUENCE [LARGE SCALE GENOMIC DNA]</scope>
    <source>
        <strain>MW2</strain>
    </source>
</reference>
<name>PYRG_STAAW</name>
<evidence type="ECO:0000255" key="1">
    <source>
        <dbReference type="HAMAP-Rule" id="MF_01227"/>
    </source>
</evidence>
<sequence length="536" mass="59992">MTKFIFVTGGVVSSLGKGITASSLGRLLKDRGLNVTIQKFDPYLNVDPGTMSPYQHGEVFVTDDGAETDLDLGHYERFIDINLNKFSNVTAGKVYSHVLKKERRGDYLGGTVQVIPHITNEIKERLLLAGESTNADVVITEIGGTTGDIESLPFIEAIRQIRSDLGRENVMYVHCTLLPYIKAAGEMKTKPTQHSVKELRGLGIQPDLIVVRTEYEMTQDLKDKIALFCDINKESVIECRDADSLYEIPLQLSQQNMDDIVIKRLQLNAKYETQLDEWKQLLDIVNNLDGKITIGLVGKYVSLQDAYLSVVESLKHAGYPFAKDIDIRWIDSSEVTDENAAEYLADVDGILVPGGFGFRASEGKISAIKYARENNVPFFGICLGMQLATVEFSRNVLGLEGAHSAELDPATPYPIIDLLPEQKDIEDLGGTLRLGLYPCSIKEGTLAQDVYGKAEIEERHRHRYEFNNDYREQLEANGMVISGTSPDGRLVEMVEIPTNDFFIACQFHPEFLSRPNRPHPIFKSFIEASLKYQQNK</sequence>
<proteinExistence type="inferred from homology"/>
<dbReference type="EC" id="6.3.4.2" evidence="1"/>
<dbReference type="EMBL" id="BA000033">
    <property type="protein sequence ID" value="BAB95916.1"/>
    <property type="molecule type" value="Genomic_DNA"/>
</dbReference>
<dbReference type="RefSeq" id="WP_000159960.1">
    <property type="nucleotide sequence ID" value="NC_003923.1"/>
</dbReference>
<dbReference type="SMR" id="P65924"/>
<dbReference type="KEGG" id="sam:MW2051"/>
<dbReference type="HOGENOM" id="CLU_011675_5_0_9"/>
<dbReference type="UniPathway" id="UPA00159">
    <property type="reaction ID" value="UER00277"/>
</dbReference>
<dbReference type="GO" id="GO:0005829">
    <property type="term" value="C:cytosol"/>
    <property type="evidence" value="ECO:0007669"/>
    <property type="project" value="TreeGrafter"/>
</dbReference>
<dbReference type="GO" id="GO:0005524">
    <property type="term" value="F:ATP binding"/>
    <property type="evidence" value="ECO:0007669"/>
    <property type="project" value="UniProtKB-KW"/>
</dbReference>
<dbReference type="GO" id="GO:0003883">
    <property type="term" value="F:CTP synthase activity"/>
    <property type="evidence" value="ECO:0007669"/>
    <property type="project" value="UniProtKB-UniRule"/>
</dbReference>
<dbReference type="GO" id="GO:0004359">
    <property type="term" value="F:glutaminase activity"/>
    <property type="evidence" value="ECO:0007669"/>
    <property type="project" value="RHEA"/>
</dbReference>
<dbReference type="GO" id="GO:0042802">
    <property type="term" value="F:identical protein binding"/>
    <property type="evidence" value="ECO:0007669"/>
    <property type="project" value="TreeGrafter"/>
</dbReference>
<dbReference type="GO" id="GO:0046872">
    <property type="term" value="F:metal ion binding"/>
    <property type="evidence" value="ECO:0007669"/>
    <property type="project" value="UniProtKB-KW"/>
</dbReference>
<dbReference type="GO" id="GO:0044210">
    <property type="term" value="P:'de novo' CTP biosynthetic process"/>
    <property type="evidence" value="ECO:0007669"/>
    <property type="project" value="UniProtKB-UniRule"/>
</dbReference>
<dbReference type="GO" id="GO:0019856">
    <property type="term" value="P:pyrimidine nucleobase biosynthetic process"/>
    <property type="evidence" value="ECO:0007669"/>
    <property type="project" value="TreeGrafter"/>
</dbReference>
<dbReference type="CDD" id="cd03113">
    <property type="entry name" value="CTPS_N"/>
    <property type="match status" value="1"/>
</dbReference>
<dbReference type="CDD" id="cd01746">
    <property type="entry name" value="GATase1_CTP_Synthase"/>
    <property type="match status" value="1"/>
</dbReference>
<dbReference type="FunFam" id="3.40.50.300:FF:000009">
    <property type="entry name" value="CTP synthase"/>
    <property type="match status" value="1"/>
</dbReference>
<dbReference type="FunFam" id="3.40.50.880:FF:000002">
    <property type="entry name" value="CTP synthase"/>
    <property type="match status" value="1"/>
</dbReference>
<dbReference type="Gene3D" id="3.40.50.880">
    <property type="match status" value="1"/>
</dbReference>
<dbReference type="Gene3D" id="3.40.50.300">
    <property type="entry name" value="P-loop containing nucleotide triphosphate hydrolases"/>
    <property type="match status" value="1"/>
</dbReference>
<dbReference type="HAMAP" id="MF_01227">
    <property type="entry name" value="PyrG"/>
    <property type="match status" value="1"/>
</dbReference>
<dbReference type="InterPro" id="IPR029062">
    <property type="entry name" value="Class_I_gatase-like"/>
</dbReference>
<dbReference type="InterPro" id="IPR004468">
    <property type="entry name" value="CTP_synthase"/>
</dbReference>
<dbReference type="InterPro" id="IPR017456">
    <property type="entry name" value="CTP_synthase_N"/>
</dbReference>
<dbReference type="InterPro" id="IPR017926">
    <property type="entry name" value="GATASE"/>
</dbReference>
<dbReference type="InterPro" id="IPR033828">
    <property type="entry name" value="GATase1_CTP_Synthase"/>
</dbReference>
<dbReference type="InterPro" id="IPR027417">
    <property type="entry name" value="P-loop_NTPase"/>
</dbReference>
<dbReference type="NCBIfam" id="NF003792">
    <property type="entry name" value="PRK05380.1"/>
    <property type="match status" value="1"/>
</dbReference>
<dbReference type="NCBIfam" id="TIGR00337">
    <property type="entry name" value="PyrG"/>
    <property type="match status" value="1"/>
</dbReference>
<dbReference type="PANTHER" id="PTHR11550">
    <property type="entry name" value="CTP SYNTHASE"/>
    <property type="match status" value="1"/>
</dbReference>
<dbReference type="PANTHER" id="PTHR11550:SF0">
    <property type="entry name" value="CTP SYNTHASE-RELATED"/>
    <property type="match status" value="1"/>
</dbReference>
<dbReference type="Pfam" id="PF06418">
    <property type="entry name" value="CTP_synth_N"/>
    <property type="match status" value="1"/>
</dbReference>
<dbReference type="Pfam" id="PF00117">
    <property type="entry name" value="GATase"/>
    <property type="match status" value="1"/>
</dbReference>
<dbReference type="SUPFAM" id="SSF52317">
    <property type="entry name" value="Class I glutamine amidotransferase-like"/>
    <property type="match status" value="1"/>
</dbReference>
<dbReference type="SUPFAM" id="SSF52540">
    <property type="entry name" value="P-loop containing nucleoside triphosphate hydrolases"/>
    <property type="match status" value="1"/>
</dbReference>
<dbReference type="PROSITE" id="PS51273">
    <property type="entry name" value="GATASE_TYPE_1"/>
    <property type="match status" value="1"/>
</dbReference>